<keyword id="KW-0150">Chloroplast</keyword>
<keyword id="KW-0903">Direct protein sequencing</keyword>
<keyword id="KW-0934">Plastid</keyword>
<keyword id="KW-1185">Reference proteome</keyword>
<keyword id="KW-0793">Thylakoid</keyword>
<keyword id="KW-0809">Transit peptide</keyword>
<accession>Q8VY52</accession>
<accession>P83050</accession>
<accession>Q8S8B1</accession>
<protein>
    <recommendedName>
        <fullName>PsbP domain-containing protein 2, chloroplastic</fullName>
    </recommendedName>
    <alternativeName>
        <fullName>PsbP-related thylakoid lumenal protein 3</fullName>
    </alternativeName>
</protein>
<evidence type="ECO:0000255" key="1"/>
<evidence type="ECO:0000269" key="2">
    <source>
    </source>
</evidence>
<evidence type="ECO:0000269" key="3">
    <source>
    </source>
</evidence>
<evidence type="ECO:0000269" key="4">
    <source>
    </source>
</evidence>
<evidence type="ECO:0000269" key="5">
    <source>
    </source>
</evidence>
<evidence type="ECO:0000305" key="6"/>
<evidence type="ECO:0000312" key="7">
    <source>
        <dbReference type="EMBL" id="AAL62434.1"/>
    </source>
</evidence>
<evidence type="ECO:0000312" key="8">
    <source>
        <dbReference type="EMBL" id="AAM15436.1"/>
    </source>
</evidence>
<reference evidence="8" key="1">
    <citation type="journal article" date="1999" name="Nature">
        <title>Sequence and analysis of chromosome 2 of the plant Arabidopsis thaliana.</title>
        <authorList>
            <person name="Lin X."/>
            <person name="Kaul S."/>
            <person name="Rounsley S.D."/>
            <person name="Shea T.P."/>
            <person name="Benito M.-I."/>
            <person name="Town C.D."/>
            <person name="Fujii C.Y."/>
            <person name="Mason T.M."/>
            <person name="Bowman C.L."/>
            <person name="Barnstead M.E."/>
            <person name="Feldblyum T.V."/>
            <person name="Buell C.R."/>
            <person name="Ketchum K.A."/>
            <person name="Lee J.J."/>
            <person name="Ronning C.M."/>
            <person name="Koo H.L."/>
            <person name="Moffat K.S."/>
            <person name="Cronin L.A."/>
            <person name="Shen M."/>
            <person name="Pai G."/>
            <person name="Van Aken S."/>
            <person name="Umayam L."/>
            <person name="Tallon L.J."/>
            <person name="Gill J.E."/>
            <person name="Adams M.D."/>
            <person name="Carrera A.J."/>
            <person name="Creasy T.H."/>
            <person name="Goodman H.M."/>
            <person name="Somerville C.R."/>
            <person name="Copenhaver G.P."/>
            <person name="Preuss D."/>
            <person name="Nierman W.C."/>
            <person name="White O."/>
            <person name="Eisen J.A."/>
            <person name="Salzberg S.L."/>
            <person name="Fraser C.M."/>
            <person name="Venter J.C."/>
        </authorList>
    </citation>
    <scope>NUCLEOTIDE SEQUENCE [LARGE SCALE GENOMIC DNA]</scope>
    <source>
        <strain evidence="2">cv. Columbia</strain>
    </source>
</reference>
<reference key="2">
    <citation type="journal article" date="2017" name="Plant J.">
        <title>Araport11: a complete reannotation of the Arabidopsis thaliana reference genome.</title>
        <authorList>
            <person name="Cheng C.Y."/>
            <person name="Krishnakumar V."/>
            <person name="Chan A.P."/>
            <person name="Thibaud-Nissen F."/>
            <person name="Schobel S."/>
            <person name="Town C.D."/>
        </authorList>
    </citation>
    <scope>GENOME REANNOTATION</scope>
    <source>
        <strain>cv. Columbia</strain>
    </source>
</reference>
<reference evidence="7" key="3">
    <citation type="journal article" date="2003" name="Science">
        <title>Empirical analysis of transcriptional activity in the Arabidopsis genome.</title>
        <authorList>
            <person name="Yamada K."/>
            <person name="Lim J."/>
            <person name="Dale J.M."/>
            <person name="Chen H."/>
            <person name="Shinn P."/>
            <person name="Palm C.J."/>
            <person name="Southwick A.M."/>
            <person name="Wu H.C."/>
            <person name="Kim C.J."/>
            <person name="Nguyen M."/>
            <person name="Pham P.K."/>
            <person name="Cheuk R.F."/>
            <person name="Karlin-Newmann G."/>
            <person name="Liu S.X."/>
            <person name="Lam B."/>
            <person name="Sakano H."/>
            <person name="Wu T."/>
            <person name="Yu G."/>
            <person name="Miranda M."/>
            <person name="Quach H.L."/>
            <person name="Tripp M."/>
            <person name="Chang C.H."/>
            <person name="Lee J.M."/>
            <person name="Toriumi M.J."/>
            <person name="Chan M.M."/>
            <person name="Tang C.C."/>
            <person name="Onodera C.S."/>
            <person name="Deng J.M."/>
            <person name="Akiyama K."/>
            <person name="Ansari Y."/>
            <person name="Arakawa T."/>
            <person name="Banh J."/>
            <person name="Banno F."/>
            <person name="Bowser L."/>
            <person name="Brooks S.Y."/>
            <person name="Carninci P."/>
            <person name="Chao Q."/>
            <person name="Choy N."/>
            <person name="Enju A."/>
            <person name="Goldsmith A.D."/>
            <person name="Gurjal M."/>
            <person name="Hansen N.F."/>
            <person name="Hayashizaki Y."/>
            <person name="Johnson-Hopson C."/>
            <person name="Hsuan V.W."/>
            <person name="Iida K."/>
            <person name="Karnes M."/>
            <person name="Khan S."/>
            <person name="Koesema E."/>
            <person name="Ishida J."/>
            <person name="Jiang P.X."/>
            <person name="Jones T."/>
            <person name="Kawai J."/>
            <person name="Kamiya A."/>
            <person name="Meyers C."/>
            <person name="Nakajima M."/>
            <person name="Narusaka M."/>
            <person name="Seki M."/>
            <person name="Sakurai T."/>
            <person name="Satou M."/>
            <person name="Tamse R."/>
            <person name="Vaysberg M."/>
            <person name="Wallender E.K."/>
            <person name="Wong C."/>
            <person name="Yamamura Y."/>
            <person name="Yuan S."/>
            <person name="Shinozaki K."/>
            <person name="Davis R.W."/>
            <person name="Theologis A."/>
            <person name="Ecker J.R."/>
        </authorList>
    </citation>
    <scope>NUCLEOTIDE SEQUENCE [LARGE SCALE MRNA]</scope>
    <source>
        <strain evidence="4">cv. Columbia</strain>
    </source>
</reference>
<reference evidence="6" key="4">
    <citation type="journal article" date="2002" name="Plant Cell">
        <title>Central functions of the lumenal and peripheral thylakoid proteome of Arabidopsis determined by experimentation and genome-wide prediction.</title>
        <authorList>
            <person name="Peltier J.-B."/>
            <person name="Emanuelsson O."/>
            <person name="Kalume D.E."/>
            <person name="Ytterberg J."/>
            <person name="Friso G."/>
            <person name="Rudella A."/>
            <person name="Liberles D.A."/>
            <person name="Soederberg L."/>
            <person name="Roepstorff P."/>
            <person name="von Heijne G."/>
            <person name="van Wijk K.J."/>
        </authorList>
    </citation>
    <scope>PROTEIN SEQUENCE OF 99-123; 126-139 AND 185-195</scope>
    <scope>SUBCELLULAR LOCATION</scope>
    <source>
        <strain evidence="3">cv. Columbia</strain>
        <tissue evidence="3">Leaf</tissue>
    </source>
</reference>
<reference key="5">
    <citation type="journal article" date="2007" name="Plant Physiol.">
        <title>Distinct functions for the two PsbP-like proteins PPL1 and PPL2 in the chloroplast thylakoid lumen of Arabidopsis.</title>
        <authorList>
            <person name="Ishihara S."/>
            <person name="Takabayashi A."/>
            <person name="Ido K."/>
            <person name="Endo T."/>
            <person name="Ifuku K."/>
            <person name="Sato F."/>
        </authorList>
    </citation>
    <scope>GENE FAMILY</scope>
    <scope>NOMENCLATURE</scope>
</reference>
<reference key="6">
    <citation type="journal article" date="2008" name="PLoS ONE">
        <title>Sorting signals, N-terminal modifications and abundance of the chloroplast proteome.</title>
        <authorList>
            <person name="Zybailov B."/>
            <person name="Rutschow H."/>
            <person name="Friso G."/>
            <person name="Rudella A."/>
            <person name="Emanuelsson O."/>
            <person name="Sun Q."/>
            <person name="van Wijk K.J."/>
        </authorList>
    </citation>
    <scope>IDENTIFICATION BY MASS SPECTROMETRY</scope>
    <scope>SUBCELLULAR LOCATION [LARGE SCALE ANALYSIS]</scope>
</reference>
<comment type="subcellular location">
    <subcellularLocation>
        <location evidence="3 5">Plastid</location>
        <location evidence="3 5">Chloroplast thylakoid lumen</location>
    </subcellularLocation>
</comment>
<comment type="similarity">
    <text evidence="6">Belongs to the PsbP family.</text>
</comment>
<comment type="sequence caution" evidence="6">
    <conflict type="erroneous gene model prediction">
        <sequence resource="EMBL-CDS" id="AAM15436"/>
    </conflict>
</comment>
<gene>
    <name type="primary">PPD2</name>
    <name type="ordered locus">At2g28605</name>
    <name type="ORF">T8O18.1</name>
</gene>
<name>PPD2_ARATH</name>
<sequence length="232" mass="25801">MWSQSFLGSAPKLCLFSSSLPPFSHHKIHKFFCFAQNPSSTVSINLSKRHLNLSILTLFFNGFLLDNKAKSMEELQRYTDSNNGFTLLIPSSYTKVEKAGANALFEELNNGSNNIGVVVSPVRIKSLDQFGSPQFVADKLINAEKRKESTKEAEVVSVGERAGLGQQVYEFEYKIDSTRGGIKRVFSAAFVSSNKLYLLNVVHSDKPENPLDSSTRMSLEQVLHSFDALPLT</sequence>
<proteinExistence type="evidence at protein level"/>
<dbReference type="EMBL" id="AC007171">
    <property type="protein sequence ID" value="AAM15436.1"/>
    <property type="status" value="ALT_SEQ"/>
    <property type="molecule type" value="Genomic_DNA"/>
</dbReference>
<dbReference type="EMBL" id="CP002685">
    <property type="protein sequence ID" value="AEC08148.1"/>
    <property type="molecule type" value="Genomic_DNA"/>
</dbReference>
<dbReference type="EMBL" id="AY072442">
    <property type="protein sequence ID" value="AAL62434.1"/>
    <property type="molecule type" value="mRNA"/>
</dbReference>
<dbReference type="EMBL" id="AY128884">
    <property type="protein sequence ID" value="AAM91284.1"/>
    <property type="molecule type" value="mRNA"/>
</dbReference>
<dbReference type="RefSeq" id="NP_850123.1">
    <property type="nucleotide sequence ID" value="NM_179792.2"/>
</dbReference>
<dbReference type="SMR" id="Q8VY52"/>
<dbReference type="BioGRID" id="2759">
    <property type="interactions" value="1"/>
</dbReference>
<dbReference type="FunCoup" id="Q8VY52">
    <property type="interactions" value="1351"/>
</dbReference>
<dbReference type="STRING" id="3702.Q8VY52"/>
<dbReference type="PaxDb" id="3702-AT2G28605.1"/>
<dbReference type="ProteomicsDB" id="249338"/>
<dbReference type="EnsemblPlants" id="AT2G28605.1">
    <property type="protein sequence ID" value="AT2G28605.1"/>
    <property type="gene ID" value="AT2G28605"/>
</dbReference>
<dbReference type="GeneID" id="817409"/>
<dbReference type="Gramene" id="AT2G28605.1">
    <property type="protein sequence ID" value="AT2G28605.1"/>
    <property type="gene ID" value="AT2G28605"/>
</dbReference>
<dbReference type="KEGG" id="ath:AT2G28605"/>
<dbReference type="Araport" id="AT2G28605"/>
<dbReference type="TAIR" id="AT2G28605"/>
<dbReference type="eggNOG" id="ENOG502QVK7">
    <property type="taxonomic scope" value="Eukaryota"/>
</dbReference>
<dbReference type="HOGENOM" id="CLU_1108666_0_0_1"/>
<dbReference type="InParanoid" id="Q8VY52"/>
<dbReference type="OMA" id="YILNVVH"/>
<dbReference type="PhylomeDB" id="Q8VY52"/>
<dbReference type="PRO" id="PR:Q8VY52"/>
<dbReference type="Proteomes" id="UP000006548">
    <property type="component" value="Chromosome 2"/>
</dbReference>
<dbReference type="ExpressionAtlas" id="Q8VY52">
    <property type="expression patterns" value="baseline and differential"/>
</dbReference>
<dbReference type="GO" id="GO:0009507">
    <property type="term" value="C:chloroplast"/>
    <property type="evidence" value="ECO:0007005"/>
    <property type="project" value="TAIR"/>
</dbReference>
<dbReference type="GO" id="GO:0009543">
    <property type="term" value="C:chloroplast thylakoid lumen"/>
    <property type="evidence" value="ECO:0007669"/>
    <property type="project" value="UniProtKB-SubCell"/>
</dbReference>
<dbReference type="GO" id="GO:0019898">
    <property type="term" value="C:extrinsic component of membrane"/>
    <property type="evidence" value="ECO:0007669"/>
    <property type="project" value="InterPro"/>
</dbReference>
<dbReference type="GO" id="GO:0009654">
    <property type="term" value="C:photosystem II oxygen evolving complex"/>
    <property type="evidence" value="ECO:0007669"/>
    <property type="project" value="InterPro"/>
</dbReference>
<dbReference type="GO" id="GO:0009579">
    <property type="term" value="C:thylakoid"/>
    <property type="evidence" value="ECO:0007005"/>
    <property type="project" value="TAIR"/>
</dbReference>
<dbReference type="GO" id="GO:0005509">
    <property type="term" value="F:calcium ion binding"/>
    <property type="evidence" value="ECO:0007669"/>
    <property type="project" value="InterPro"/>
</dbReference>
<dbReference type="GO" id="GO:0015979">
    <property type="term" value="P:photosynthesis"/>
    <property type="evidence" value="ECO:0007669"/>
    <property type="project" value="InterPro"/>
</dbReference>
<dbReference type="FunFam" id="3.40.1000.10:FF:000021">
    <property type="entry name" value="PsbP domain-containing protein 2, chloroplastic"/>
    <property type="match status" value="1"/>
</dbReference>
<dbReference type="Gene3D" id="3.40.1000.10">
    <property type="entry name" value="Mog1/PsbP, alpha/beta/alpha sandwich"/>
    <property type="match status" value="1"/>
</dbReference>
<dbReference type="InterPro" id="IPR016123">
    <property type="entry name" value="Mog1/PsbP_a/b/a-sand"/>
</dbReference>
<dbReference type="InterPro" id="IPR002683">
    <property type="entry name" value="PsbP_C"/>
</dbReference>
<dbReference type="NCBIfam" id="NF040946">
    <property type="entry name" value="PSII_PsbP"/>
    <property type="match status" value="1"/>
</dbReference>
<dbReference type="PANTHER" id="PTHR31407">
    <property type="match status" value="1"/>
</dbReference>
<dbReference type="PANTHER" id="PTHR31407:SF3">
    <property type="entry name" value="PSBP DOMAIN-CONTAINING PROTEIN 2, CHLOROPLASTIC"/>
    <property type="match status" value="1"/>
</dbReference>
<dbReference type="Pfam" id="PF01789">
    <property type="entry name" value="PsbP"/>
    <property type="match status" value="1"/>
</dbReference>
<dbReference type="SUPFAM" id="SSF55724">
    <property type="entry name" value="Mog1p/PsbP-like"/>
    <property type="match status" value="1"/>
</dbReference>
<feature type="transit peptide" description="Chloroplast" evidence="1">
    <location>
        <begin position="1"/>
        <end position="34"/>
    </location>
</feature>
<feature type="transit peptide" description="Thylakoid" evidence="1">
    <location>
        <begin position="35"/>
        <end position="71"/>
    </location>
</feature>
<feature type="chain" id="PRO_0000300511" description="PsbP domain-containing protein 2, chloroplastic">
    <location>
        <begin position="72"/>
        <end position="232"/>
    </location>
</feature>
<organism>
    <name type="scientific">Arabidopsis thaliana</name>
    <name type="common">Mouse-ear cress</name>
    <dbReference type="NCBI Taxonomy" id="3702"/>
    <lineage>
        <taxon>Eukaryota</taxon>
        <taxon>Viridiplantae</taxon>
        <taxon>Streptophyta</taxon>
        <taxon>Embryophyta</taxon>
        <taxon>Tracheophyta</taxon>
        <taxon>Spermatophyta</taxon>
        <taxon>Magnoliopsida</taxon>
        <taxon>eudicotyledons</taxon>
        <taxon>Gunneridae</taxon>
        <taxon>Pentapetalae</taxon>
        <taxon>rosids</taxon>
        <taxon>malvids</taxon>
        <taxon>Brassicales</taxon>
        <taxon>Brassicaceae</taxon>
        <taxon>Camelineae</taxon>
        <taxon>Arabidopsis</taxon>
    </lineage>
</organism>